<evidence type="ECO:0000255" key="1">
    <source>
        <dbReference type="HAMAP-Rule" id="MF_01392"/>
    </source>
</evidence>
<proteinExistence type="inferred from homology"/>
<dbReference type="EMBL" id="AP006715">
    <property type="protein sequence ID" value="BAE92487.1"/>
    <property type="molecule type" value="Genomic_DNA"/>
</dbReference>
<dbReference type="RefSeq" id="YP_537044.1">
    <property type="nucleotide sequence ID" value="NC_007932.1"/>
</dbReference>
<dbReference type="GeneID" id="3978872"/>
<dbReference type="GO" id="GO:0009535">
    <property type="term" value="C:chloroplast thylakoid membrane"/>
    <property type="evidence" value="ECO:0007669"/>
    <property type="project" value="UniProtKB-SubCell"/>
</dbReference>
<dbReference type="GO" id="GO:0017004">
    <property type="term" value="P:cytochrome complex assembly"/>
    <property type="evidence" value="ECO:0007669"/>
    <property type="project" value="UniProtKB-UniRule"/>
</dbReference>
<dbReference type="HAMAP" id="MF_01392">
    <property type="entry name" value="CytC_Ccs1"/>
    <property type="match status" value="1"/>
</dbReference>
<dbReference type="InterPro" id="IPR023494">
    <property type="entry name" value="Cyt_c_bgen_Ccs1/CcsB/ResB"/>
</dbReference>
<dbReference type="InterPro" id="IPR007816">
    <property type="entry name" value="ResB-like_domain"/>
</dbReference>
<dbReference type="PANTHER" id="PTHR31566">
    <property type="entry name" value="CYTOCHROME C BIOGENESIS PROTEIN CCS1, CHLOROPLASTIC"/>
    <property type="match status" value="1"/>
</dbReference>
<dbReference type="PANTHER" id="PTHR31566:SF0">
    <property type="entry name" value="CYTOCHROME C BIOGENESIS PROTEIN CCS1, CHLOROPLASTIC"/>
    <property type="match status" value="1"/>
</dbReference>
<dbReference type="Pfam" id="PF05140">
    <property type="entry name" value="ResB"/>
    <property type="match status" value="2"/>
</dbReference>
<organism>
    <name type="scientific">Pyropia yezoensis</name>
    <name type="common">Susabi-nori</name>
    <name type="synonym">Porphyra yezoensis</name>
    <dbReference type="NCBI Taxonomy" id="2788"/>
    <lineage>
        <taxon>Eukaryota</taxon>
        <taxon>Rhodophyta</taxon>
        <taxon>Bangiophyceae</taxon>
        <taxon>Bangiales</taxon>
        <taxon>Bangiaceae</taxon>
        <taxon>Pyropia</taxon>
    </lineage>
</organism>
<protein>
    <recommendedName>
        <fullName evidence="1">Cytochrome c biogenesis protein Ccs1</fullName>
    </recommendedName>
</protein>
<geneLocation type="chloroplast"/>
<reference key="1">
    <citation type="submission" date="2003-11" db="EMBL/GenBank/DDBJ databases">
        <title>Whole genome sequence of Porphyra yezoensis chloroplast.</title>
        <authorList>
            <person name="Kunimoto M."/>
            <person name="Morishima K."/>
            <person name="Yoshikawa M."/>
            <person name="Fukuda S."/>
            <person name="Kobayashi T."/>
            <person name="Kobayashi M."/>
            <person name="Okazaki T."/>
            <person name="Ohara I."/>
            <person name="Nakayama I."/>
        </authorList>
    </citation>
    <scope>NUCLEOTIDE SEQUENCE [LARGE SCALE GENOMIC DNA]</scope>
    <source>
        <strain>U-51</strain>
    </source>
</reference>
<accession>Q1XDC4</accession>
<keyword id="KW-0150">Chloroplast</keyword>
<keyword id="KW-0201">Cytochrome c-type biogenesis</keyword>
<keyword id="KW-0472">Membrane</keyword>
<keyword id="KW-0934">Plastid</keyword>
<keyword id="KW-0793">Thylakoid</keyword>
<keyword id="KW-0812">Transmembrane</keyword>
<keyword id="KW-1133">Transmembrane helix</keyword>
<feature type="chain" id="PRO_0000277353" description="Cytochrome c biogenesis protein Ccs1">
    <location>
        <begin position="1"/>
        <end position="440"/>
    </location>
</feature>
<feature type="transmembrane region" description="Helical" evidence="1">
    <location>
        <begin position="25"/>
        <end position="45"/>
    </location>
</feature>
<feature type="transmembrane region" description="Helical" evidence="1">
    <location>
        <begin position="84"/>
        <end position="104"/>
    </location>
</feature>
<feature type="transmembrane region" description="Helical" evidence="1">
    <location>
        <begin position="170"/>
        <end position="190"/>
    </location>
</feature>
<comment type="function">
    <text evidence="1">Required during biogenesis of c-type cytochromes (cytochrome c6 and cytochrome f) at the step of heme attachment.</text>
</comment>
<comment type="subunit">
    <text evidence="1">May interact with CcsA.</text>
</comment>
<comment type="subcellular location">
    <subcellularLocation>
        <location evidence="1">Plastid</location>
        <location evidence="1">Chloroplast thylakoid membrane</location>
        <topology evidence="1">Multi-pass membrane protein</topology>
    </subcellularLocation>
</comment>
<comment type="similarity">
    <text evidence="1">Belongs to the Ccs1/CcsB family.</text>
</comment>
<sequence length="440" mass="50796">MKRQLNLRFNRKDIRWYLLRLFSNLQFSIILLLLIAIFSTIGTVIEQNKESSFYQTQYTLSNEYYNILNWKNIELFGFNHVYTTWWFLSLLFIFSLSLFTCSISRQIPSLQNARRWHFYKNPNQFKKFTGSQEIKTTQLNLLASCLQNYNYHIFQQGKSIYGYKGLLGRLAPIFVHGSIILLLTGSVLGLVSGFSAQEMVPSGELFRLQNIISSGKFSYIPQEFSARVNDFNIEYNPNKSISQFFSDISILNSEGKELKRSTIYVNKPLEFHGLTIYQTDWDIIAIRVRINNGNILQIPLKSVLLPNNNKIWIGVLFQEKESQLSVVLSDLQGQATIYNKNGKNILSINIGEKYIINNSTITFLNTIASTGLQIKNDPGIPIVYASFFFLITSISVSYISYSQIWIVEKNRHFYIGGVTNRAQLMFEEELLKISKMSSSI</sequence>
<name>CCS1_PYRYE</name>
<gene>
    <name evidence="1" type="primary">ccs1</name>
    <name type="synonym">ycf44</name>
</gene>